<feature type="chain" id="PRO_1000075034" description="5'-nucleotidase SurE">
    <location>
        <begin position="1"/>
        <end position="259"/>
    </location>
</feature>
<feature type="binding site" evidence="1">
    <location>
        <position position="8"/>
    </location>
    <ligand>
        <name>a divalent metal cation</name>
        <dbReference type="ChEBI" id="CHEBI:60240"/>
    </ligand>
</feature>
<feature type="binding site" evidence="1">
    <location>
        <position position="9"/>
    </location>
    <ligand>
        <name>a divalent metal cation</name>
        <dbReference type="ChEBI" id="CHEBI:60240"/>
    </ligand>
</feature>
<feature type="binding site" evidence="1">
    <location>
        <position position="39"/>
    </location>
    <ligand>
        <name>a divalent metal cation</name>
        <dbReference type="ChEBI" id="CHEBI:60240"/>
    </ligand>
</feature>
<feature type="binding site" evidence="1">
    <location>
        <position position="96"/>
    </location>
    <ligand>
        <name>a divalent metal cation</name>
        <dbReference type="ChEBI" id="CHEBI:60240"/>
    </ligand>
</feature>
<comment type="function">
    <text evidence="1">Nucleotidase that shows phosphatase activity on nucleoside 5'-monophosphates.</text>
</comment>
<comment type="catalytic activity">
    <reaction evidence="1">
        <text>a ribonucleoside 5'-phosphate + H2O = a ribonucleoside + phosphate</text>
        <dbReference type="Rhea" id="RHEA:12484"/>
        <dbReference type="ChEBI" id="CHEBI:15377"/>
        <dbReference type="ChEBI" id="CHEBI:18254"/>
        <dbReference type="ChEBI" id="CHEBI:43474"/>
        <dbReference type="ChEBI" id="CHEBI:58043"/>
        <dbReference type="EC" id="3.1.3.5"/>
    </reaction>
</comment>
<comment type="cofactor">
    <cofactor evidence="1">
        <name>a divalent metal cation</name>
        <dbReference type="ChEBI" id="CHEBI:60240"/>
    </cofactor>
    <text evidence="1">Binds 1 divalent metal cation per subunit.</text>
</comment>
<comment type="subcellular location">
    <subcellularLocation>
        <location evidence="1">Cytoplasm</location>
    </subcellularLocation>
</comment>
<comment type="similarity">
    <text evidence="1">Belongs to the SurE nucleotidase family.</text>
</comment>
<evidence type="ECO:0000255" key="1">
    <source>
        <dbReference type="HAMAP-Rule" id="MF_00060"/>
    </source>
</evidence>
<name>SURE_PELTS</name>
<sequence>MRILISNDDGIQAEGINALRACLQEQNEIYIVAPDRERSATGHKITMHRPLRVKEWHYPEAKTVGWAVDGTPADCVKLGLEALLPAPPDLVISGINLGPNLGTDVLYSGTVSAAIEGIINGIPAIAVSLASYDYRDFSFSGKLIKELVSAFGNRLPDKTLLNINVPPGKPCGIKVTRLGNRRYINIFDKRTDPRGRVYYWMAGEPFDLDEDDPDTDVWAVKEGYVSITPVHFDLTDYKIMERLKKLLKTAKILNRELKD</sequence>
<organism>
    <name type="scientific">Pelotomaculum thermopropionicum (strain DSM 13744 / JCM 10971 / SI)</name>
    <dbReference type="NCBI Taxonomy" id="370438"/>
    <lineage>
        <taxon>Bacteria</taxon>
        <taxon>Bacillati</taxon>
        <taxon>Bacillota</taxon>
        <taxon>Clostridia</taxon>
        <taxon>Eubacteriales</taxon>
        <taxon>Desulfotomaculaceae</taxon>
        <taxon>Pelotomaculum</taxon>
    </lineage>
</organism>
<keyword id="KW-0963">Cytoplasm</keyword>
<keyword id="KW-0378">Hydrolase</keyword>
<keyword id="KW-0479">Metal-binding</keyword>
<keyword id="KW-0547">Nucleotide-binding</keyword>
<keyword id="KW-1185">Reference proteome</keyword>
<dbReference type="EC" id="3.1.3.5" evidence="1"/>
<dbReference type="EMBL" id="AP009389">
    <property type="protein sequence ID" value="BAF59578.1"/>
    <property type="molecule type" value="Genomic_DNA"/>
</dbReference>
<dbReference type="SMR" id="A5D2G6"/>
<dbReference type="STRING" id="370438.PTH_1397"/>
<dbReference type="KEGG" id="pth:PTH_1397"/>
<dbReference type="eggNOG" id="COG0496">
    <property type="taxonomic scope" value="Bacteria"/>
</dbReference>
<dbReference type="HOGENOM" id="CLU_045192_1_3_9"/>
<dbReference type="Proteomes" id="UP000006556">
    <property type="component" value="Chromosome"/>
</dbReference>
<dbReference type="GO" id="GO:0005737">
    <property type="term" value="C:cytoplasm"/>
    <property type="evidence" value="ECO:0007669"/>
    <property type="project" value="UniProtKB-SubCell"/>
</dbReference>
<dbReference type="GO" id="GO:0008254">
    <property type="term" value="F:3'-nucleotidase activity"/>
    <property type="evidence" value="ECO:0007669"/>
    <property type="project" value="TreeGrafter"/>
</dbReference>
<dbReference type="GO" id="GO:0008253">
    <property type="term" value="F:5'-nucleotidase activity"/>
    <property type="evidence" value="ECO:0007669"/>
    <property type="project" value="UniProtKB-UniRule"/>
</dbReference>
<dbReference type="GO" id="GO:0004309">
    <property type="term" value="F:exopolyphosphatase activity"/>
    <property type="evidence" value="ECO:0007669"/>
    <property type="project" value="TreeGrafter"/>
</dbReference>
<dbReference type="GO" id="GO:0046872">
    <property type="term" value="F:metal ion binding"/>
    <property type="evidence" value="ECO:0007669"/>
    <property type="project" value="UniProtKB-UniRule"/>
</dbReference>
<dbReference type="GO" id="GO:0000166">
    <property type="term" value="F:nucleotide binding"/>
    <property type="evidence" value="ECO:0007669"/>
    <property type="project" value="UniProtKB-KW"/>
</dbReference>
<dbReference type="FunFam" id="3.40.1210.10:FF:000001">
    <property type="entry name" value="5'/3'-nucleotidase SurE"/>
    <property type="match status" value="1"/>
</dbReference>
<dbReference type="Gene3D" id="3.40.1210.10">
    <property type="entry name" value="Survival protein SurE-like phosphatase/nucleotidase"/>
    <property type="match status" value="1"/>
</dbReference>
<dbReference type="HAMAP" id="MF_00060">
    <property type="entry name" value="SurE"/>
    <property type="match status" value="1"/>
</dbReference>
<dbReference type="InterPro" id="IPR030048">
    <property type="entry name" value="SurE"/>
</dbReference>
<dbReference type="InterPro" id="IPR002828">
    <property type="entry name" value="SurE-like_Pase/nucleotidase"/>
</dbReference>
<dbReference type="InterPro" id="IPR036523">
    <property type="entry name" value="SurE-like_sf"/>
</dbReference>
<dbReference type="NCBIfam" id="NF001490">
    <property type="entry name" value="PRK00346.1-4"/>
    <property type="match status" value="1"/>
</dbReference>
<dbReference type="NCBIfam" id="NF001492">
    <property type="entry name" value="PRK00346.2-2"/>
    <property type="match status" value="1"/>
</dbReference>
<dbReference type="NCBIfam" id="TIGR00087">
    <property type="entry name" value="surE"/>
    <property type="match status" value="1"/>
</dbReference>
<dbReference type="PANTHER" id="PTHR30457">
    <property type="entry name" value="5'-NUCLEOTIDASE SURE"/>
    <property type="match status" value="1"/>
</dbReference>
<dbReference type="PANTHER" id="PTHR30457:SF12">
    <property type="entry name" value="5'_3'-NUCLEOTIDASE SURE"/>
    <property type="match status" value="1"/>
</dbReference>
<dbReference type="Pfam" id="PF01975">
    <property type="entry name" value="SurE"/>
    <property type="match status" value="1"/>
</dbReference>
<dbReference type="SUPFAM" id="SSF64167">
    <property type="entry name" value="SurE-like"/>
    <property type="match status" value="1"/>
</dbReference>
<accession>A5D2G6</accession>
<gene>
    <name evidence="1" type="primary">surE</name>
    <name type="ordered locus">PTH_1397</name>
</gene>
<protein>
    <recommendedName>
        <fullName evidence="1">5'-nucleotidase SurE</fullName>
        <ecNumber evidence="1">3.1.3.5</ecNumber>
    </recommendedName>
    <alternativeName>
        <fullName evidence="1">Nucleoside 5'-monophosphate phosphohydrolase</fullName>
    </alternativeName>
</protein>
<reference key="1">
    <citation type="journal article" date="2008" name="Genome Res.">
        <title>The genome of Pelotomaculum thermopropionicum reveals niche-associated evolution in anaerobic microbiota.</title>
        <authorList>
            <person name="Kosaka T."/>
            <person name="Kato S."/>
            <person name="Shimoyama T."/>
            <person name="Ishii S."/>
            <person name="Abe T."/>
            <person name="Watanabe K."/>
        </authorList>
    </citation>
    <scope>NUCLEOTIDE SEQUENCE [LARGE SCALE GENOMIC DNA]</scope>
    <source>
        <strain>DSM 13744 / JCM 10971 / SI</strain>
    </source>
</reference>
<proteinExistence type="inferred from homology"/>